<accession>C3P635</accession>
<evidence type="ECO:0000255" key="1">
    <source>
        <dbReference type="HAMAP-Rule" id="MF_01849"/>
    </source>
</evidence>
<evidence type="ECO:0000255" key="2">
    <source>
        <dbReference type="PROSITE-ProRule" id="PRU01266"/>
    </source>
</evidence>
<name>RLMN_BACAA</name>
<organism>
    <name type="scientific">Bacillus anthracis (strain A0248)</name>
    <dbReference type="NCBI Taxonomy" id="592021"/>
    <lineage>
        <taxon>Bacteria</taxon>
        <taxon>Bacillati</taxon>
        <taxon>Bacillota</taxon>
        <taxon>Bacilli</taxon>
        <taxon>Bacillales</taxon>
        <taxon>Bacillaceae</taxon>
        <taxon>Bacillus</taxon>
        <taxon>Bacillus cereus group</taxon>
    </lineage>
</organism>
<dbReference type="EC" id="2.1.1.192" evidence="1"/>
<dbReference type="EMBL" id="CP001598">
    <property type="protein sequence ID" value="ACQ49308.1"/>
    <property type="molecule type" value="Genomic_DNA"/>
</dbReference>
<dbReference type="RefSeq" id="WP_000450543.1">
    <property type="nucleotide sequence ID" value="NC_012659.1"/>
</dbReference>
<dbReference type="SMR" id="C3P635"/>
<dbReference type="GeneID" id="75087000"/>
<dbReference type="KEGG" id="bai:BAA_4026"/>
<dbReference type="HOGENOM" id="CLU_029101_0_1_9"/>
<dbReference type="GO" id="GO:0005737">
    <property type="term" value="C:cytoplasm"/>
    <property type="evidence" value="ECO:0007669"/>
    <property type="project" value="UniProtKB-SubCell"/>
</dbReference>
<dbReference type="GO" id="GO:0051539">
    <property type="term" value="F:4 iron, 4 sulfur cluster binding"/>
    <property type="evidence" value="ECO:0007669"/>
    <property type="project" value="UniProtKB-UniRule"/>
</dbReference>
<dbReference type="GO" id="GO:0046872">
    <property type="term" value="F:metal ion binding"/>
    <property type="evidence" value="ECO:0007669"/>
    <property type="project" value="UniProtKB-KW"/>
</dbReference>
<dbReference type="GO" id="GO:0070040">
    <property type="term" value="F:rRNA (adenine(2503)-C2-)-methyltransferase activity"/>
    <property type="evidence" value="ECO:0007669"/>
    <property type="project" value="UniProtKB-UniRule"/>
</dbReference>
<dbReference type="GO" id="GO:0019843">
    <property type="term" value="F:rRNA binding"/>
    <property type="evidence" value="ECO:0007669"/>
    <property type="project" value="UniProtKB-UniRule"/>
</dbReference>
<dbReference type="GO" id="GO:0002935">
    <property type="term" value="F:tRNA (adenine(37)-C2)-methyltransferase activity"/>
    <property type="evidence" value="ECO:0007669"/>
    <property type="project" value="UniProtKB-UniRule"/>
</dbReference>
<dbReference type="GO" id="GO:0000049">
    <property type="term" value="F:tRNA binding"/>
    <property type="evidence" value="ECO:0007669"/>
    <property type="project" value="UniProtKB-UniRule"/>
</dbReference>
<dbReference type="GO" id="GO:0070475">
    <property type="term" value="P:rRNA base methylation"/>
    <property type="evidence" value="ECO:0007669"/>
    <property type="project" value="UniProtKB-UniRule"/>
</dbReference>
<dbReference type="GO" id="GO:0030488">
    <property type="term" value="P:tRNA methylation"/>
    <property type="evidence" value="ECO:0007669"/>
    <property type="project" value="UniProtKB-UniRule"/>
</dbReference>
<dbReference type="CDD" id="cd01335">
    <property type="entry name" value="Radical_SAM"/>
    <property type="match status" value="1"/>
</dbReference>
<dbReference type="FunFam" id="1.10.150.530:FF:000002">
    <property type="entry name" value="Probable dual-specificity RNA methyltransferase RlmN"/>
    <property type="match status" value="1"/>
</dbReference>
<dbReference type="FunFam" id="3.20.20.70:FF:000014">
    <property type="entry name" value="Probable dual-specificity RNA methyltransferase RlmN"/>
    <property type="match status" value="1"/>
</dbReference>
<dbReference type="Gene3D" id="1.10.150.530">
    <property type="match status" value="1"/>
</dbReference>
<dbReference type="Gene3D" id="3.20.20.70">
    <property type="entry name" value="Aldolase class I"/>
    <property type="match status" value="1"/>
</dbReference>
<dbReference type="HAMAP" id="MF_01849">
    <property type="entry name" value="RNA_methyltr_RlmN"/>
    <property type="match status" value="1"/>
</dbReference>
<dbReference type="InterPro" id="IPR013785">
    <property type="entry name" value="Aldolase_TIM"/>
</dbReference>
<dbReference type="InterPro" id="IPR040072">
    <property type="entry name" value="Methyltransferase_A"/>
</dbReference>
<dbReference type="InterPro" id="IPR048641">
    <property type="entry name" value="RlmN_N"/>
</dbReference>
<dbReference type="InterPro" id="IPR027492">
    <property type="entry name" value="RNA_MTrfase_RlmN"/>
</dbReference>
<dbReference type="InterPro" id="IPR004383">
    <property type="entry name" value="rRNA_lsu_MTrfase_RlmN/Cfr"/>
</dbReference>
<dbReference type="InterPro" id="IPR007197">
    <property type="entry name" value="rSAM"/>
</dbReference>
<dbReference type="NCBIfam" id="TIGR00048">
    <property type="entry name" value="rRNA_mod_RlmN"/>
    <property type="match status" value="1"/>
</dbReference>
<dbReference type="PANTHER" id="PTHR30544">
    <property type="entry name" value="23S RRNA METHYLTRANSFERASE"/>
    <property type="match status" value="1"/>
</dbReference>
<dbReference type="PANTHER" id="PTHR30544:SF5">
    <property type="entry name" value="RADICAL SAM CORE DOMAIN-CONTAINING PROTEIN"/>
    <property type="match status" value="1"/>
</dbReference>
<dbReference type="Pfam" id="PF04055">
    <property type="entry name" value="Radical_SAM"/>
    <property type="match status" value="1"/>
</dbReference>
<dbReference type="Pfam" id="PF21016">
    <property type="entry name" value="RlmN_N"/>
    <property type="match status" value="1"/>
</dbReference>
<dbReference type="PIRSF" id="PIRSF006004">
    <property type="entry name" value="CHP00048"/>
    <property type="match status" value="1"/>
</dbReference>
<dbReference type="SFLD" id="SFLDF00275">
    <property type="entry name" value="adenosine_C2_methyltransferase"/>
    <property type="match status" value="1"/>
</dbReference>
<dbReference type="SFLD" id="SFLDS00029">
    <property type="entry name" value="Radical_SAM"/>
    <property type="match status" value="1"/>
</dbReference>
<dbReference type="SUPFAM" id="SSF102114">
    <property type="entry name" value="Radical SAM enzymes"/>
    <property type="match status" value="1"/>
</dbReference>
<dbReference type="PROSITE" id="PS51918">
    <property type="entry name" value="RADICAL_SAM"/>
    <property type="match status" value="1"/>
</dbReference>
<comment type="function">
    <text evidence="1">Specifically methylates position 2 of adenine 2503 in 23S rRNA and position 2 of adenine 37 in tRNAs.</text>
</comment>
<comment type="catalytic activity">
    <reaction evidence="1">
        <text>adenosine(2503) in 23S rRNA + 2 reduced [2Fe-2S]-[ferredoxin] + 2 S-adenosyl-L-methionine = 2-methyladenosine(2503) in 23S rRNA + 5'-deoxyadenosine + L-methionine + 2 oxidized [2Fe-2S]-[ferredoxin] + S-adenosyl-L-homocysteine</text>
        <dbReference type="Rhea" id="RHEA:42916"/>
        <dbReference type="Rhea" id="RHEA-COMP:10000"/>
        <dbReference type="Rhea" id="RHEA-COMP:10001"/>
        <dbReference type="Rhea" id="RHEA-COMP:10152"/>
        <dbReference type="Rhea" id="RHEA-COMP:10282"/>
        <dbReference type="ChEBI" id="CHEBI:17319"/>
        <dbReference type="ChEBI" id="CHEBI:33737"/>
        <dbReference type="ChEBI" id="CHEBI:33738"/>
        <dbReference type="ChEBI" id="CHEBI:57844"/>
        <dbReference type="ChEBI" id="CHEBI:57856"/>
        <dbReference type="ChEBI" id="CHEBI:59789"/>
        <dbReference type="ChEBI" id="CHEBI:74411"/>
        <dbReference type="ChEBI" id="CHEBI:74497"/>
        <dbReference type="EC" id="2.1.1.192"/>
    </reaction>
</comment>
<comment type="catalytic activity">
    <reaction evidence="1">
        <text>adenosine(37) in tRNA + 2 reduced [2Fe-2S]-[ferredoxin] + 2 S-adenosyl-L-methionine = 2-methyladenosine(37) in tRNA + 5'-deoxyadenosine + L-methionine + 2 oxidized [2Fe-2S]-[ferredoxin] + S-adenosyl-L-homocysteine</text>
        <dbReference type="Rhea" id="RHEA:43332"/>
        <dbReference type="Rhea" id="RHEA-COMP:10000"/>
        <dbReference type="Rhea" id="RHEA-COMP:10001"/>
        <dbReference type="Rhea" id="RHEA-COMP:10162"/>
        <dbReference type="Rhea" id="RHEA-COMP:10485"/>
        <dbReference type="ChEBI" id="CHEBI:17319"/>
        <dbReference type="ChEBI" id="CHEBI:33737"/>
        <dbReference type="ChEBI" id="CHEBI:33738"/>
        <dbReference type="ChEBI" id="CHEBI:57844"/>
        <dbReference type="ChEBI" id="CHEBI:57856"/>
        <dbReference type="ChEBI" id="CHEBI:59789"/>
        <dbReference type="ChEBI" id="CHEBI:74411"/>
        <dbReference type="ChEBI" id="CHEBI:74497"/>
        <dbReference type="EC" id="2.1.1.192"/>
    </reaction>
</comment>
<comment type="cofactor">
    <cofactor evidence="1">
        <name>[4Fe-4S] cluster</name>
        <dbReference type="ChEBI" id="CHEBI:49883"/>
    </cofactor>
    <text evidence="1">Binds 1 [4Fe-4S] cluster. The cluster is coordinated with 3 cysteines and an exchangeable S-adenosyl-L-methionine.</text>
</comment>
<comment type="subcellular location">
    <subcellularLocation>
        <location evidence="1">Cytoplasm</location>
    </subcellularLocation>
</comment>
<comment type="miscellaneous">
    <text evidence="1">Reaction proceeds by a ping-pong mechanism involving intermediate methylation of a conserved cysteine residue.</text>
</comment>
<comment type="similarity">
    <text evidence="1">Belongs to the radical SAM superfamily. RlmN family.</text>
</comment>
<protein>
    <recommendedName>
        <fullName evidence="1">Probable dual-specificity RNA methyltransferase RlmN</fullName>
        <ecNumber evidence="1">2.1.1.192</ecNumber>
    </recommendedName>
    <alternativeName>
        <fullName evidence="1">23S rRNA (adenine(2503)-C(2))-methyltransferase</fullName>
    </alternativeName>
    <alternativeName>
        <fullName evidence="1">23S rRNA m2A2503 methyltransferase</fullName>
    </alternativeName>
    <alternativeName>
        <fullName evidence="1">Ribosomal RNA large subunit methyltransferase N</fullName>
    </alternativeName>
    <alternativeName>
        <fullName evidence="1">tRNA (adenine(37)-C(2))-methyltransferase</fullName>
    </alternativeName>
    <alternativeName>
        <fullName evidence="1">tRNA m2A37 methyltransferase</fullName>
    </alternativeName>
</protein>
<feature type="chain" id="PRO_1000188545" description="Probable dual-specificity RNA methyltransferase RlmN">
    <location>
        <begin position="1"/>
        <end position="362"/>
    </location>
</feature>
<feature type="domain" description="Radical SAM core" evidence="2">
    <location>
        <begin position="111"/>
        <end position="344"/>
    </location>
</feature>
<feature type="active site" description="Proton acceptor" evidence="1">
    <location>
        <position position="105"/>
    </location>
</feature>
<feature type="active site" description="S-methylcysteine intermediate" evidence="1">
    <location>
        <position position="349"/>
    </location>
</feature>
<feature type="binding site" evidence="1">
    <location>
        <position position="125"/>
    </location>
    <ligand>
        <name>[4Fe-4S] cluster</name>
        <dbReference type="ChEBI" id="CHEBI:49883"/>
        <note>4Fe-4S-S-AdoMet</note>
    </ligand>
</feature>
<feature type="binding site" evidence="1">
    <location>
        <position position="129"/>
    </location>
    <ligand>
        <name>[4Fe-4S] cluster</name>
        <dbReference type="ChEBI" id="CHEBI:49883"/>
        <note>4Fe-4S-S-AdoMet</note>
    </ligand>
</feature>
<feature type="binding site" evidence="1">
    <location>
        <position position="132"/>
    </location>
    <ligand>
        <name>[4Fe-4S] cluster</name>
        <dbReference type="ChEBI" id="CHEBI:49883"/>
        <note>4Fe-4S-S-AdoMet</note>
    </ligand>
</feature>
<feature type="binding site" evidence="1">
    <location>
        <begin position="175"/>
        <end position="176"/>
    </location>
    <ligand>
        <name>S-adenosyl-L-methionine</name>
        <dbReference type="ChEBI" id="CHEBI:59789"/>
    </ligand>
</feature>
<feature type="binding site" evidence="1">
    <location>
        <position position="207"/>
    </location>
    <ligand>
        <name>S-adenosyl-L-methionine</name>
        <dbReference type="ChEBI" id="CHEBI:59789"/>
    </ligand>
</feature>
<feature type="binding site" evidence="1">
    <location>
        <begin position="230"/>
        <end position="232"/>
    </location>
    <ligand>
        <name>S-adenosyl-L-methionine</name>
        <dbReference type="ChEBI" id="CHEBI:59789"/>
    </ligand>
</feature>
<feature type="binding site" evidence="1">
    <location>
        <position position="306"/>
    </location>
    <ligand>
        <name>S-adenosyl-L-methionine</name>
        <dbReference type="ChEBI" id="CHEBI:59789"/>
    </ligand>
</feature>
<feature type="disulfide bond" description="(transient)" evidence="1">
    <location>
        <begin position="118"/>
        <end position="349"/>
    </location>
</feature>
<reference key="1">
    <citation type="submission" date="2009-04" db="EMBL/GenBank/DDBJ databases">
        <title>Genome sequence of Bacillus anthracis A0248.</title>
        <authorList>
            <person name="Dodson R.J."/>
            <person name="Munk A.C."/>
            <person name="Bruce D."/>
            <person name="Detter C."/>
            <person name="Tapia R."/>
            <person name="Sutton G."/>
            <person name="Sims D."/>
            <person name="Brettin T."/>
        </authorList>
    </citation>
    <scope>NUCLEOTIDE SEQUENCE [LARGE SCALE GENOMIC DNA]</scope>
    <source>
        <strain>A0248</strain>
    </source>
</reference>
<keyword id="KW-0004">4Fe-4S</keyword>
<keyword id="KW-0963">Cytoplasm</keyword>
<keyword id="KW-1015">Disulfide bond</keyword>
<keyword id="KW-0408">Iron</keyword>
<keyword id="KW-0411">Iron-sulfur</keyword>
<keyword id="KW-0479">Metal-binding</keyword>
<keyword id="KW-0489">Methyltransferase</keyword>
<keyword id="KW-0698">rRNA processing</keyword>
<keyword id="KW-0949">S-adenosyl-L-methionine</keyword>
<keyword id="KW-0808">Transferase</keyword>
<keyword id="KW-0819">tRNA processing</keyword>
<sequence length="362" mass="41553">METTVRKQKKNLETKKPSIYSLQLHEMQDWLKEQGEPKFRAGQIFDWLYKKRVKNYEDMSNLSKGLREKLSNSFDITTLNTLVKQTSSDGTIKFLFQLYDGYSIETVLMRHEYGNSICVTTQVGCRIGCTFCASTLGGLKRNLEAGEIVAQVVEVQRALDESEERVSSLVVMGIGEPFDNYDNLMGFLRIINHEKGLHIGARHMTVSTSGIIPKIYKFAEEDLQINFAISLHAPNSELRSKLMPINRAYKLPDLMEAIKYYVNRTGRRITFEYGLFGGENDQVEHAEELAALLKGVKCHVNLIPVNYVPERDYVRTPREQIFLFEKTLKDRGVNVTIRREQGHDIDAACGQLRAKERKEETR</sequence>
<gene>
    <name evidence="1" type="primary">rlmN</name>
    <name type="ordered locus">BAA_4026</name>
</gene>
<proteinExistence type="inferred from homology"/>